<name>BARX1_CHICK</name>
<protein>
    <recommendedName>
        <fullName>Homeobox protein BarH-like 1</fullName>
    </recommendedName>
</protein>
<reference key="1">
    <citation type="journal article" date="1999" name="Dev. Dyn.">
        <title>Expression of chick Barx-1 and its differential regulation by FGF-8 and BMP signaling in the maxillary primordia.</title>
        <authorList>
            <person name="Barlow A.J."/>
            <person name="Bogardi J.P."/>
            <person name="Ladher R."/>
            <person name="Francis-West P.H."/>
        </authorList>
    </citation>
    <scope>NUCLEOTIDE SEQUENCE [MRNA]</scope>
</reference>
<reference key="2">
    <citation type="journal article" date="2000" name="Proc. Natl. Acad. Sci. U.S.A.">
        <title>Conservation of early odontogenic signaling pathways in Aves.</title>
        <authorList>
            <person name="Chen Y."/>
            <person name="Zhang Y."/>
            <person name="Jiang T.-X."/>
            <person name="Barlow A.J."/>
            <person name="St Amand T.R."/>
            <person name="Hu Y."/>
            <person name="Heaney S."/>
            <person name="Francis-West P."/>
            <person name="Chuong C.-M."/>
            <person name="Maas R."/>
        </authorList>
    </citation>
    <scope>FUNCTION</scope>
</reference>
<keyword id="KW-0238">DNA-binding</keyword>
<keyword id="KW-0371">Homeobox</keyword>
<keyword id="KW-0539">Nucleus</keyword>
<keyword id="KW-1185">Reference proteome</keyword>
<keyword id="KW-0804">Transcription</keyword>
<keyword id="KW-0805">Transcription regulation</keyword>
<feature type="chain" id="PRO_0000048836" description="Homeobox protein BarH-like 1">
    <location>
        <begin position="1" status="less than"/>
        <end position="207"/>
    </location>
</feature>
<feature type="DNA-binding region" description="Homeobox" evidence="1">
    <location>
        <begin position="95"/>
        <end position="154"/>
    </location>
</feature>
<feature type="region of interest" description="Disordered" evidence="2">
    <location>
        <begin position="157"/>
        <end position="207"/>
    </location>
</feature>
<feature type="compositionally biased region" description="Basic and acidic residues" evidence="2">
    <location>
        <begin position="183"/>
        <end position="207"/>
    </location>
</feature>
<feature type="non-terminal residue">
    <location>
        <position position="1"/>
    </location>
</feature>
<dbReference type="EMBL" id="AF116460">
    <property type="protein sequence ID" value="AAD21043.1"/>
    <property type="molecule type" value="mRNA"/>
</dbReference>
<dbReference type="BMRB" id="Q9W6D8"/>
<dbReference type="SMR" id="Q9W6D8"/>
<dbReference type="FunCoup" id="Q9W6D8">
    <property type="interactions" value="232"/>
</dbReference>
<dbReference type="VEuPathDB" id="HostDB:geneid_374017"/>
<dbReference type="InParanoid" id="Q9W6D8"/>
<dbReference type="OrthoDB" id="6159439at2759"/>
<dbReference type="PhylomeDB" id="Q9W6D8"/>
<dbReference type="Proteomes" id="UP000000539">
    <property type="component" value="Unassembled WGS sequence"/>
</dbReference>
<dbReference type="GO" id="GO:0005634">
    <property type="term" value="C:nucleus"/>
    <property type="evidence" value="ECO:0000318"/>
    <property type="project" value="GO_Central"/>
</dbReference>
<dbReference type="GO" id="GO:0000981">
    <property type="term" value="F:DNA-binding transcription factor activity, RNA polymerase II-specific"/>
    <property type="evidence" value="ECO:0000318"/>
    <property type="project" value="GO_Central"/>
</dbReference>
<dbReference type="GO" id="GO:0000977">
    <property type="term" value="F:RNA polymerase II transcription regulatory region sequence-specific DNA binding"/>
    <property type="evidence" value="ECO:0000318"/>
    <property type="project" value="GO_Central"/>
</dbReference>
<dbReference type="GO" id="GO:0006357">
    <property type="term" value="P:regulation of transcription by RNA polymerase II"/>
    <property type="evidence" value="ECO:0000318"/>
    <property type="project" value="GO_Central"/>
</dbReference>
<dbReference type="CDD" id="cd00086">
    <property type="entry name" value="homeodomain"/>
    <property type="match status" value="1"/>
</dbReference>
<dbReference type="FunFam" id="1.10.10.60:FF:000103">
    <property type="entry name" value="Homeobox protein BarH-like 2"/>
    <property type="match status" value="1"/>
</dbReference>
<dbReference type="Gene3D" id="1.10.10.60">
    <property type="entry name" value="Homeodomain-like"/>
    <property type="match status" value="1"/>
</dbReference>
<dbReference type="InterPro" id="IPR001356">
    <property type="entry name" value="HD"/>
</dbReference>
<dbReference type="InterPro" id="IPR020479">
    <property type="entry name" value="HD_metazoa"/>
</dbReference>
<dbReference type="InterPro" id="IPR017970">
    <property type="entry name" value="Homeobox_CS"/>
</dbReference>
<dbReference type="InterPro" id="IPR050848">
    <property type="entry name" value="Homeobox_TF"/>
</dbReference>
<dbReference type="InterPro" id="IPR009057">
    <property type="entry name" value="Homeodomain-like_sf"/>
</dbReference>
<dbReference type="InterPro" id="IPR000047">
    <property type="entry name" value="HTH_motif"/>
</dbReference>
<dbReference type="PANTHER" id="PTHR24333:SF12">
    <property type="entry name" value="BARX HOMEOBOX 1"/>
    <property type="match status" value="1"/>
</dbReference>
<dbReference type="PANTHER" id="PTHR24333">
    <property type="entry name" value="HOMEO BOX HB9 LIKE A-RELATED"/>
    <property type="match status" value="1"/>
</dbReference>
<dbReference type="Pfam" id="PF00046">
    <property type="entry name" value="Homeodomain"/>
    <property type="match status" value="1"/>
</dbReference>
<dbReference type="PRINTS" id="PR00024">
    <property type="entry name" value="HOMEOBOX"/>
</dbReference>
<dbReference type="PRINTS" id="PR00031">
    <property type="entry name" value="HTHREPRESSR"/>
</dbReference>
<dbReference type="SMART" id="SM00389">
    <property type="entry name" value="HOX"/>
    <property type="match status" value="1"/>
</dbReference>
<dbReference type="SUPFAM" id="SSF46689">
    <property type="entry name" value="Homeodomain-like"/>
    <property type="match status" value="1"/>
</dbReference>
<dbReference type="PROSITE" id="PS00027">
    <property type="entry name" value="HOMEOBOX_1"/>
    <property type="match status" value="1"/>
</dbReference>
<dbReference type="PROSITE" id="PS50071">
    <property type="entry name" value="HOMEOBOX_2"/>
    <property type="match status" value="1"/>
</dbReference>
<comment type="function">
    <text evidence="3">Transcription factor, which is involved in craniofacial development, in odontogenic region definition, and in stomach organogenesis. Binds to a regulatory module of the NCAM promoter.</text>
</comment>
<comment type="subcellular location">
    <subcellularLocation>
        <location evidence="4">Nucleus</location>
    </subcellularLocation>
</comment>
<comment type="tissue specificity">
    <text>Expressed predominantly in the facial primordia, developing stomach, and proximal limbs.</text>
</comment>
<comment type="developmental stage">
    <text>First detectable in the facial primordia at stage 18 after neural crest migration. Expressed in regions derived from both mid- and hindbrain neural crest. Also expressed in the developing cartilage elements of the limb, first within a restricted population in the prechondrogenic mesenchyme and later in the rounded chondrocytes at the epiphyses of developing long bones.</text>
</comment>
<comment type="similarity">
    <text evidence="4">Belongs to the BAR homeobox family.</text>
</comment>
<organism>
    <name type="scientific">Gallus gallus</name>
    <name type="common">Chicken</name>
    <dbReference type="NCBI Taxonomy" id="9031"/>
    <lineage>
        <taxon>Eukaryota</taxon>
        <taxon>Metazoa</taxon>
        <taxon>Chordata</taxon>
        <taxon>Craniata</taxon>
        <taxon>Vertebrata</taxon>
        <taxon>Euteleostomi</taxon>
        <taxon>Archelosauria</taxon>
        <taxon>Archosauria</taxon>
        <taxon>Dinosauria</taxon>
        <taxon>Saurischia</taxon>
        <taxon>Theropoda</taxon>
        <taxon>Coelurosauria</taxon>
        <taxon>Aves</taxon>
        <taxon>Neognathae</taxon>
        <taxon>Galloanserae</taxon>
        <taxon>Galliformes</taxon>
        <taxon>Phasianidae</taxon>
        <taxon>Phasianinae</taxon>
        <taxon>Gallus</taxon>
    </lineage>
</organism>
<sequence length="207" mass="22468">ANERPPGSCSSSGCRRCCRPGPYHSHLAVLKAEQAAVFKFPLAPLGCSGLGSALLAAGPGMPGPAGASHLPLELQLRGKLEAAGSGEPGSKAKKGRRSRTVFTELQLMGLEKRFEKQKYLSTPDRIDLAESLGLSQLQVKTWYQNRRMKWKKIVLQGGGLESPTKPKGRPKKNSIPSSEQLSEQERAKETEKPPESPGEPSERQQEE</sequence>
<proteinExistence type="evidence at transcript level"/>
<gene>
    <name type="primary">BARX1</name>
</gene>
<evidence type="ECO:0000255" key="1">
    <source>
        <dbReference type="PROSITE-ProRule" id="PRU00108"/>
    </source>
</evidence>
<evidence type="ECO:0000256" key="2">
    <source>
        <dbReference type="SAM" id="MobiDB-lite"/>
    </source>
</evidence>
<evidence type="ECO:0000269" key="3">
    <source>
    </source>
</evidence>
<evidence type="ECO:0000305" key="4"/>
<accession>Q9W6D8</accession>